<gene>
    <name type="ordered locus">TSIB_1358</name>
</gene>
<comment type="similarity">
    <text evidence="1">Belongs to the UPF0212 family.</text>
</comment>
<sequence length="130" mass="14286">MGDYIVVLEAPIIVREVESADDAINVAVSKVAKALNKEKLDFVRVEIGYSQCPVCGSPFESAFVIGNVGLVGIYLTLKVFNAQSLEHAERIAKAVVGKALKKVPLKVFEIKEFHDGKEEGIELNNHKNEF</sequence>
<dbReference type="EMBL" id="CP001463">
    <property type="protein sequence ID" value="ACS90410.1"/>
    <property type="molecule type" value="Genomic_DNA"/>
</dbReference>
<dbReference type="RefSeq" id="WP_015849628.1">
    <property type="nucleotide sequence ID" value="NC_012883.1"/>
</dbReference>
<dbReference type="STRING" id="604354.TSIB_1358"/>
<dbReference type="GeneID" id="8096360"/>
<dbReference type="KEGG" id="tsi:TSIB_1358"/>
<dbReference type="eggNOG" id="arCOG02119">
    <property type="taxonomic scope" value="Archaea"/>
</dbReference>
<dbReference type="HOGENOM" id="CLU_138334_0_0_2"/>
<dbReference type="OrthoDB" id="63517at2157"/>
<dbReference type="Proteomes" id="UP000009079">
    <property type="component" value="Chromosome"/>
</dbReference>
<dbReference type="HAMAP" id="MF_01223">
    <property type="entry name" value="UPF0212"/>
    <property type="match status" value="1"/>
</dbReference>
<dbReference type="InterPro" id="IPR007564">
    <property type="entry name" value="UPF0212"/>
</dbReference>
<dbReference type="NCBIfam" id="NF003035">
    <property type="entry name" value="PRK03922.1"/>
    <property type="match status" value="1"/>
</dbReference>
<dbReference type="PANTHER" id="PTHR42199">
    <property type="entry name" value="UPF0212 PROTEIN MJ0068"/>
    <property type="match status" value="1"/>
</dbReference>
<dbReference type="PANTHER" id="PTHR42199:SF1">
    <property type="entry name" value="UPF0212 PROTEIN TK1194"/>
    <property type="match status" value="1"/>
</dbReference>
<dbReference type="Pfam" id="PF04475">
    <property type="entry name" value="DUF555"/>
    <property type="match status" value="1"/>
</dbReference>
<dbReference type="PIRSF" id="PIRSF016934">
    <property type="entry name" value="UCP016934"/>
    <property type="match status" value="1"/>
</dbReference>
<proteinExistence type="inferred from homology"/>
<accession>C6A465</accession>
<organism>
    <name type="scientific">Thermococcus sibiricus (strain DSM 12597 / MM 739)</name>
    <dbReference type="NCBI Taxonomy" id="604354"/>
    <lineage>
        <taxon>Archaea</taxon>
        <taxon>Methanobacteriati</taxon>
        <taxon>Methanobacteriota</taxon>
        <taxon>Thermococci</taxon>
        <taxon>Thermococcales</taxon>
        <taxon>Thermococcaceae</taxon>
        <taxon>Thermococcus</taxon>
    </lineage>
</organism>
<keyword id="KW-1185">Reference proteome</keyword>
<name>Y1358_THESM</name>
<protein>
    <recommendedName>
        <fullName evidence="1">UPF0212 protein TSIB_1358</fullName>
    </recommendedName>
</protein>
<reference key="1">
    <citation type="journal article" date="2009" name="Appl. Environ. Microbiol.">
        <title>Metabolic versatility and indigenous origin of the archaeon Thermococcus sibiricus, isolated from a siberian oil reservoir, as revealed by genome analysis.</title>
        <authorList>
            <person name="Mardanov A.V."/>
            <person name="Ravin N.V."/>
            <person name="Svetlitchnyi V.A."/>
            <person name="Beletsky A.V."/>
            <person name="Miroshnichenko M.L."/>
            <person name="Bonch-Osmolovskaya E.A."/>
            <person name="Skryabin K.G."/>
        </authorList>
    </citation>
    <scope>NUCLEOTIDE SEQUENCE [LARGE SCALE GENOMIC DNA]</scope>
    <source>
        <strain>DSM 12597 / MM 739</strain>
    </source>
</reference>
<feature type="chain" id="PRO_1000213979" description="UPF0212 protein TSIB_1358">
    <location>
        <begin position="1"/>
        <end position="130"/>
    </location>
</feature>
<evidence type="ECO:0000255" key="1">
    <source>
        <dbReference type="HAMAP-Rule" id="MF_01223"/>
    </source>
</evidence>